<dbReference type="EC" id="3.4.24.-" evidence="1"/>
<dbReference type="EMBL" id="FM178379">
    <property type="protein sequence ID" value="CAQ79007.1"/>
    <property type="molecule type" value="Genomic_DNA"/>
</dbReference>
<dbReference type="RefSeq" id="WP_012550028.1">
    <property type="nucleotide sequence ID" value="NC_011312.1"/>
</dbReference>
<dbReference type="SMR" id="B6EKC3"/>
<dbReference type="MEROPS" id="M48.002"/>
<dbReference type="KEGG" id="vsa:VSAL_I1322"/>
<dbReference type="eggNOG" id="COG0501">
    <property type="taxonomic scope" value="Bacteria"/>
</dbReference>
<dbReference type="HOGENOM" id="CLU_042266_1_0_6"/>
<dbReference type="Proteomes" id="UP000001730">
    <property type="component" value="Chromosome 1"/>
</dbReference>
<dbReference type="GO" id="GO:0005886">
    <property type="term" value="C:plasma membrane"/>
    <property type="evidence" value="ECO:0007669"/>
    <property type="project" value="UniProtKB-SubCell"/>
</dbReference>
<dbReference type="GO" id="GO:0004222">
    <property type="term" value="F:metalloendopeptidase activity"/>
    <property type="evidence" value="ECO:0007669"/>
    <property type="project" value="UniProtKB-UniRule"/>
</dbReference>
<dbReference type="GO" id="GO:0008270">
    <property type="term" value="F:zinc ion binding"/>
    <property type="evidence" value="ECO:0007669"/>
    <property type="project" value="UniProtKB-UniRule"/>
</dbReference>
<dbReference type="GO" id="GO:0006508">
    <property type="term" value="P:proteolysis"/>
    <property type="evidence" value="ECO:0007669"/>
    <property type="project" value="UniProtKB-KW"/>
</dbReference>
<dbReference type="CDD" id="cd07335">
    <property type="entry name" value="M48B_HtpX_like"/>
    <property type="match status" value="1"/>
</dbReference>
<dbReference type="FunFam" id="3.30.2010.10:FF:000001">
    <property type="entry name" value="Protease HtpX"/>
    <property type="match status" value="1"/>
</dbReference>
<dbReference type="Gene3D" id="3.30.2010.10">
    <property type="entry name" value="Metalloproteases ('zincins'), catalytic domain"/>
    <property type="match status" value="1"/>
</dbReference>
<dbReference type="HAMAP" id="MF_00188">
    <property type="entry name" value="Pept_M48_protease_HtpX"/>
    <property type="match status" value="1"/>
</dbReference>
<dbReference type="InterPro" id="IPR050083">
    <property type="entry name" value="HtpX_protease"/>
</dbReference>
<dbReference type="InterPro" id="IPR022919">
    <property type="entry name" value="Pept_M48_protease_HtpX"/>
</dbReference>
<dbReference type="InterPro" id="IPR001915">
    <property type="entry name" value="Peptidase_M48"/>
</dbReference>
<dbReference type="NCBIfam" id="NF003965">
    <property type="entry name" value="PRK05457.1"/>
    <property type="match status" value="1"/>
</dbReference>
<dbReference type="PANTHER" id="PTHR43221">
    <property type="entry name" value="PROTEASE HTPX"/>
    <property type="match status" value="1"/>
</dbReference>
<dbReference type="PANTHER" id="PTHR43221:SF1">
    <property type="entry name" value="PROTEASE HTPX"/>
    <property type="match status" value="1"/>
</dbReference>
<dbReference type="Pfam" id="PF01435">
    <property type="entry name" value="Peptidase_M48"/>
    <property type="match status" value="1"/>
</dbReference>
<feature type="chain" id="PRO_1000098804" description="Protease HtpX">
    <location>
        <begin position="1"/>
        <end position="291"/>
    </location>
</feature>
<feature type="transmembrane region" description="Helical" evidence="1">
    <location>
        <begin position="4"/>
        <end position="24"/>
    </location>
</feature>
<feature type="transmembrane region" description="Helical" evidence="1">
    <location>
        <begin position="36"/>
        <end position="56"/>
    </location>
</feature>
<feature type="transmembrane region" description="Helical" evidence="1">
    <location>
        <begin position="151"/>
        <end position="171"/>
    </location>
</feature>
<feature type="transmembrane region" description="Helical" evidence="1">
    <location>
        <begin position="199"/>
        <end position="219"/>
    </location>
</feature>
<feature type="active site" evidence="1">
    <location>
        <position position="144"/>
    </location>
</feature>
<feature type="binding site" evidence="1">
    <location>
        <position position="143"/>
    </location>
    <ligand>
        <name>Zn(2+)</name>
        <dbReference type="ChEBI" id="CHEBI:29105"/>
        <note>catalytic</note>
    </ligand>
</feature>
<feature type="binding site" evidence="1">
    <location>
        <position position="147"/>
    </location>
    <ligand>
        <name>Zn(2+)</name>
        <dbReference type="ChEBI" id="CHEBI:29105"/>
        <note>catalytic</note>
    </ligand>
</feature>
<feature type="binding site" evidence="1">
    <location>
        <position position="225"/>
    </location>
    <ligand>
        <name>Zn(2+)</name>
        <dbReference type="ChEBI" id="CHEBI:29105"/>
        <note>catalytic</note>
    </ligand>
</feature>
<name>HTPX_ALISL</name>
<gene>
    <name evidence="1" type="primary">htpX</name>
    <name type="ordered locus">VSAL_I1322</name>
</gene>
<reference key="1">
    <citation type="journal article" date="2008" name="BMC Genomics">
        <title>The genome sequence of the fish pathogen Aliivibrio salmonicida strain LFI1238 shows extensive evidence of gene decay.</title>
        <authorList>
            <person name="Hjerde E."/>
            <person name="Lorentzen M.S."/>
            <person name="Holden M.T."/>
            <person name="Seeger K."/>
            <person name="Paulsen S."/>
            <person name="Bason N."/>
            <person name="Churcher C."/>
            <person name="Harris D."/>
            <person name="Norbertczak H."/>
            <person name="Quail M.A."/>
            <person name="Sanders S."/>
            <person name="Thurston S."/>
            <person name="Parkhill J."/>
            <person name="Willassen N.P."/>
            <person name="Thomson N.R."/>
        </authorList>
    </citation>
    <scope>NUCLEOTIDE SEQUENCE [LARGE SCALE GENOMIC DNA]</scope>
    <source>
        <strain>LFI1238</strain>
    </source>
</reference>
<evidence type="ECO:0000255" key="1">
    <source>
        <dbReference type="HAMAP-Rule" id="MF_00188"/>
    </source>
</evidence>
<keyword id="KW-0997">Cell inner membrane</keyword>
<keyword id="KW-1003">Cell membrane</keyword>
<keyword id="KW-0378">Hydrolase</keyword>
<keyword id="KW-0472">Membrane</keyword>
<keyword id="KW-0479">Metal-binding</keyword>
<keyword id="KW-0482">Metalloprotease</keyword>
<keyword id="KW-0645">Protease</keyword>
<keyword id="KW-0346">Stress response</keyword>
<keyword id="KW-0812">Transmembrane</keyword>
<keyword id="KW-1133">Transmembrane helix</keyword>
<keyword id="KW-0862">Zinc</keyword>
<comment type="cofactor">
    <cofactor evidence="1">
        <name>Zn(2+)</name>
        <dbReference type="ChEBI" id="CHEBI:29105"/>
    </cofactor>
    <text evidence="1">Binds 1 zinc ion per subunit.</text>
</comment>
<comment type="subcellular location">
    <subcellularLocation>
        <location evidence="1">Cell inner membrane</location>
        <topology evidence="1">Multi-pass membrane protein</topology>
    </subcellularLocation>
</comment>
<comment type="similarity">
    <text evidence="1">Belongs to the peptidase M48B family.</text>
</comment>
<accession>B6EKC3</accession>
<proteinExistence type="inferred from homology"/>
<protein>
    <recommendedName>
        <fullName evidence="1">Protease HtpX</fullName>
        <ecNumber evidence="1">3.4.24.-</ecNumber>
    </recommendedName>
    <alternativeName>
        <fullName evidence="1">Heat shock protein HtpX</fullName>
    </alternativeName>
</protein>
<organism>
    <name type="scientific">Aliivibrio salmonicida (strain LFI1238)</name>
    <name type="common">Vibrio salmonicida (strain LFI1238)</name>
    <dbReference type="NCBI Taxonomy" id="316275"/>
    <lineage>
        <taxon>Bacteria</taxon>
        <taxon>Pseudomonadati</taxon>
        <taxon>Pseudomonadota</taxon>
        <taxon>Gammaproteobacteria</taxon>
        <taxon>Vibrionales</taxon>
        <taxon>Vibrionaceae</taxon>
        <taxon>Aliivibrio</taxon>
    </lineage>
</organism>
<sequence length="291" mass="31672">MKRIALFLATNLAVMIVFSIVLNIVYAVTGIQQGSLSGLLVMAVLFGFGGSLVSLLMSKKMALRSVGGEVIEQPRNETEHWLMETVSRQAQQVGIGMPTVAIYDSPDMNAFATGAKRDDSLVAVSTGLLHNMTRDEAEAVLAHEVSHIANGDMITMTLMQGVVNTFVIFLSRMIANAVSGFTSNDEEGEGEGGSFMTYFIVSTVLEIAFGFLASFLTMWFSRHREFYADAGAANLVGKDKMIAALERLRMGQESQLEGSMMAFGINGKKSLTELLMSHPPLEKRINALRQL</sequence>